<organism>
    <name type="scientific">Nitrobacter winogradskyi (strain ATCC 25391 / DSM 10237 / CIP 104748 / NCIMB 11846 / Nb-255)</name>
    <dbReference type="NCBI Taxonomy" id="323098"/>
    <lineage>
        <taxon>Bacteria</taxon>
        <taxon>Pseudomonadati</taxon>
        <taxon>Pseudomonadota</taxon>
        <taxon>Alphaproteobacteria</taxon>
        <taxon>Hyphomicrobiales</taxon>
        <taxon>Nitrobacteraceae</taxon>
        <taxon>Nitrobacter</taxon>
    </lineage>
</organism>
<gene>
    <name evidence="1" type="primary">trpF</name>
    <name type="ordered locus">Nwi_0056</name>
</gene>
<feature type="chain" id="PRO_1000018616" description="N-(5'-phosphoribosyl)anthranilate isomerase">
    <location>
        <begin position="1"/>
        <end position="225"/>
    </location>
</feature>
<evidence type="ECO:0000255" key="1">
    <source>
        <dbReference type="HAMAP-Rule" id="MF_00135"/>
    </source>
</evidence>
<protein>
    <recommendedName>
        <fullName evidence="1">N-(5'-phosphoribosyl)anthranilate isomerase</fullName>
        <shortName evidence="1">PRAI</shortName>
        <ecNumber evidence="1">5.3.1.24</ecNumber>
    </recommendedName>
</protein>
<reference key="1">
    <citation type="journal article" date="2006" name="Appl. Environ. Microbiol.">
        <title>Genome sequence of the chemolithoautotrophic nitrite-oxidizing bacterium Nitrobacter winogradskyi Nb-255.</title>
        <authorList>
            <person name="Starkenburg S.R."/>
            <person name="Chain P.S.G."/>
            <person name="Sayavedra-Soto L.A."/>
            <person name="Hauser L."/>
            <person name="Land M.L."/>
            <person name="Larimer F.W."/>
            <person name="Malfatti S.A."/>
            <person name="Klotz M.G."/>
            <person name="Bottomley P.J."/>
            <person name="Arp D.J."/>
            <person name="Hickey W.J."/>
        </authorList>
    </citation>
    <scope>NUCLEOTIDE SEQUENCE [LARGE SCALE GENOMIC DNA]</scope>
    <source>
        <strain>ATCC 25391 / DSM 10237 / CIP 104748 / NCIMB 11846 / Nb-255</strain>
    </source>
</reference>
<keyword id="KW-0028">Amino-acid biosynthesis</keyword>
<keyword id="KW-0057">Aromatic amino acid biosynthesis</keyword>
<keyword id="KW-0413">Isomerase</keyword>
<keyword id="KW-1185">Reference proteome</keyword>
<keyword id="KW-0822">Tryptophan biosynthesis</keyword>
<accession>Q3SWL7</accession>
<dbReference type="EC" id="5.3.1.24" evidence="1"/>
<dbReference type="EMBL" id="CP000115">
    <property type="protein sequence ID" value="ABA03324.1"/>
    <property type="molecule type" value="Genomic_DNA"/>
</dbReference>
<dbReference type="RefSeq" id="WP_011313395.1">
    <property type="nucleotide sequence ID" value="NC_007406.1"/>
</dbReference>
<dbReference type="SMR" id="Q3SWL7"/>
<dbReference type="STRING" id="323098.Nwi_0056"/>
<dbReference type="KEGG" id="nwi:Nwi_0056"/>
<dbReference type="eggNOG" id="COG0135">
    <property type="taxonomic scope" value="Bacteria"/>
</dbReference>
<dbReference type="HOGENOM" id="CLU_076364_1_1_5"/>
<dbReference type="OrthoDB" id="9796196at2"/>
<dbReference type="UniPathway" id="UPA00035">
    <property type="reaction ID" value="UER00042"/>
</dbReference>
<dbReference type="Proteomes" id="UP000002531">
    <property type="component" value="Chromosome"/>
</dbReference>
<dbReference type="GO" id="GO:0004640">
    <property type="term" value="F:phosphoribosylanthranilate isomerase activity"/>
    <property type="evidence" value="ECO:0007669"/>
    <property type="project" value="UniProtKB-UniRule"/>
</dbReference>
<dbReference type="GO" id="GO:0000162">
    <property type="term" value="P:L-tryptophan biosynthetic process"/>
    <property type="evidence" value="ECO:0007669"/>
    <property type="project" value="UniProtKB-UniRule"/>
</dbReference>
<dbReference type="CDD" id="cd00405">
    <property type="entry name" value="PRAI"/>
    <property type="match status" value="1"/>
</dbReference>
<dbReference type="Gene3D" id="3.20.20.70">
    <property type="entry name" value="Aldolase class I"/>
    <property type="match status" value="1"/>
</dbReference>
<dbReference type="HAMAP" id="MF_00135">
    <property type="entry name" value="PRAI"/>
    <property type="match status" value="1"/>
</dbReference>
<dbReference type="InterPro" id="IPR013785">
    <property type="entry name" value="Aldolase_TIM"/>
</dbReference>
<dbReference type="InterPro" id="IPR001240">
    <property type="entry name" value="PRAI_dom"/>
</dbReference>
<dbReference type="InterPro" id="IPR011060">
    <property type="entry name" value="RibuloseP-bd_barrel"/>
</dbReference>
<dbReference type="InterPro" id="IPR044643">
    <property type="entry name" value="TrpF_fam"/>
</dbReference>
<dbReference type="NCBIfam" id="NF002295">
    <property type="entry name" value="PRK01222.1-1"/>
    <property type="match status" value="1"/>
</dbReference>
<dbReference type="PANTHER" id="PTHR42894">
    <property type="entry name" value="N-(5'-PHOSPHORIBOSYL)ANTHRANILATE ISOMERASE"/>
    <property type="match status" value="1"/>
</dbReference>
<dbReference type="PANTHER" id="PTHR42894:SF1">
    <property type="entry name" value="N-(5'-PHOSPHORIBOSYL)ANTHRANILATE ISOMERASE"/>
    <property type="match status" value="1"/>
</dbReference>
<dbReference type="Pfam" id="PF00697">
    <property type="entry name" value="PRAI"/>
    <property type="match status" value="1"/>
</dbReference>
<dbReference type="SUPFAM" id="SSF51366">
    <property type="entry name" value="Ribulose-phoshate binding barrel"/>
    <property type="match status" value="1"/>
</dbReference>
<comment type="catalytic activity">
    <reaction evidence="1">
        <text>N-(5-phospho-beta-D-ribosyl)anthranilate = 1-(2-carboxyphenylamino)-1-deoxy-D-ribulose 5-phosphate</text>
        <dbReference type="Rhea" id="RHEA:21540"/>
        <dbReference type="ChEBI" id="CHEBI:18277"/>
        <dbReference type="ChEBI" id="CHEBI:58613"/>
        <dbReference type="EC" id="5.3.1.24"/>
    </reaction>
</comment>
<comment type="pathway">
    <text evidence="1">Amino-acid biosynthesis; L-tryptophan biosynthesis; L-tryptophan from chorismate: step 3/5.</text>
</comment>
<comment type="similarity">
    <text evidence="1">Belongs to the TrpF family.</text>
</comment>
<sequence length="225" mass="23863">MSLIVKICGLSTPSTLDVALQAGADMVGFVFFPPSPRHLELARAQELGAQVRGRAAKVALTADADDETLCGIIEALRPDLLQLHGKETVPRIREIKRRFGLPVMKAIGVEIAADLADLPRYAAVADRLLFDARPPKHATRPGGLGVPFDWRLLTNLSVDIPFMLSGGLAAGNVDDAVRITRAGGVDVSSGVESAPGVKDAGMVRDFIRAARAAETSLREATSHVP</sequence>
<name>TRPF_NITWN</name>
<proteinExistence type="inferred from homology"/>